<proteinExistence type="inferred from homology"/>
<evidence type="ECO:0000255" key="1">
    <source>
        <dbReference type="HAMAP-Rule" id="MF_00736"/>
    </source>
</evidence>
<evidence type="ECO:0000305" key="2"/>
<gene>
    <name evidence="1" type="primary">rplK</name>
    <name type="ordered locus">DVU_2924</name>
</gene>
<protein>
    <recommendedName>
        <fullName evidence="1">Large ribosomal subunit protein uL11</fullName>
    </recommendedName>
    <alternativeName>
        <fullName evidence="2">50S ribosomal protein L11</fullName>
    </alternativeName>
</protein>
<comment type="function">
    <text evidence="1">Forms part of the ribosomal stalk which helps the ribosome interact with GTP-bound translation factors.</text>
</comment>
<comment type="subunit">
    <text evidence="1">Part of the ribosomal stalk of the 50S ribosomal subunit. Interacts with L10 and the large rRNA to form the base of the stalk. L10 forms an elongated spine to which L12 dimers bind in a sequential fashion forming a multimeric L10(L12)X complex.</text>
</comment>
<comment type="PTM">
    <text evidence="1">One or more lysine residues are methylated.</text>
</comment>
<comment type="similarity">
    <text evidence="1">Belongs to the universal ribosomal protein uL11 family.</text>
</comment>
<name>RL11_NITV2</name>
<reference key="1">
    <citation type="journal article" date="2004" name="Nat. Biotechnol.">
        <title>The genome sequence of the anaerobic, sulfate-reducing bacterium Desulfovibrio vulgaris Hildenborough.</title>
        <authorList>
            <person name="Heidelberg J.F."/>
            <person name="Seshadri R."/>
            <person name="Haveman S.A."/>
            <person name="Hemme C.L."/>
            <person name="Paulsen I.T."/>
            <person name="Kolonay J.F."/>
            <person name="Eisen J.A."/>
            <person name="Ward N.L."/>
            <person name="Methe B.A."/>
            <person name="Brinkac L.M."/>
            <person name="Daugherty S.C."/>
            <person name="DeBoy R.T."/>
            <person name="Dodson R.J."/>
            <person name="Durkin A.S."/>
            <person name="Madupu R."/>
            <person name="Nelson W.C."/>
            <person name="Sullivan S.A."/>
            <person name="Fouts D.E."/>
            <person name="Haft D.H."/>
            <person name="Selengut J."/>
            <person name="Peterson J.D."/>
            <person name="Davidsen T.M."/>
            <person name="Zafar N."/>
            <person name="Zhou L."/>
            <person name="Radune D."/>
            <person name="Dimitrov G."/>
            <person name="Hance M."/>
            <person name="Tran K."/>
            <person name="Khouri H.M."/>
            <person name="Gill J."/>
            <person name="Utterback T.R."/>
            <person name="Feldblyum T.V."/>
            <person name="Wall J.D."/>
            <person name="Voordouw G."/>
            <person name="Fraser C.M."/>
        </authorList>
    </citation>
    <scope>NUCLEOTIDE SEQUENCE [LARGE SCALE GENOMIC DNA]</scope>
    <source>
        <strain>ATCC 29579 / DSM 644 / CCUG 34227 / NCIMB 8303 / VKM B-1760 / Hildenborough</strain>
    </source>
</reference>
<keyword id="KW-0488">Methylation</keyword>
<keyword id="KW-1185">Reference proteome</keyword>
<keyword id="KW-0687">Ribonucleoprotein</keyword>
<keyword id="KW-0689">Ribosomal protein</keyword>
<keyword id="KW-0694">RNA-binding</keyword>
<keyword id="KW-0699">rRNA-binding</keyword>
<sequence length="140" mass="14874">MAKKEVAKIKLQIPAGAANPSPPVGPALGQHGLNIMAFCKEFNAKTMEQKGMITPVVITVYADRSFSFITKTPPASVLLIKAAKLEKGSGEPNRNKVGSVTMAQVEEIAALKMPDLTAKDLEAAKRNILGTARSMGIEVK</sequence>
<accession>P62433</accession>
<feature type="chain" id="PRO_0000104282" description="Large ribosomal subunit protein uL11">
    <location>
        <begin position="1"/>
        <end position="140"/>
    </location>
</feature>
<dbReference type="EMBL" id="AE017285">
    <property type="protein sequence ID" value="AAS97396.1"/>
    <property type="molecule type" value="Genomic_DNA"/>
</dbReference>
<dbReference type="RefSeq" id="WP_010940184.1">
    <property type="nucleotide sequence ID" value="NC_002937.3"/>
</dbReference>
<dbReference type="RefSeq" id="YP_012136.1">
    <property type="nucleotide sequence ID" value="NC_002937.3"/>
</dbReference>
<dbReference type="SMR" id="P62433"/>
<dbReference type="STRING" id="882.DVU_2924"/>
<dbReference type="PaxDb" id="882-DVU_2924"/>
<dbReference type="EnsemblBacteria" id="AAS97396">
    <property type="protein sequence ID" value="AAS97396"/>
    <property type="gene ID" value="DVU_2924"/>
</dbReference>
<dbReference type="KEGG" id="dvu:DVU_2924"/>
<dbReference type="PATRIC" id="fig|882.5.peg.2643"/>
<dbReference type="eggNOG" id="COG0080">
    <property type="taxonomic scope" value="Bacteria"/>
</dbReference>
<dbReference type="HOGENOM" id="CLU_074237_2_0_7"/>
<dbReference type="OrthoDB" id="9802408at2"/>
<dbReference type="PhylomeDB" id="P62433"/>
<dbReference type="Proteomes" id="UP000002194">
    <property type="component" value="Chromosome"/>
</dbReference>
<dbReference type="GO" id="GO:0022625">
    <property type="term" value="C:cytosolic large ribosomal subunit"/>
    <property type="evidence" value="ECO:0007669"/>
    <property type="project" value="TreeGrafter"/>
</dbReference>
<dbReference type="GO" id="GO:0070180">
    <property type="term" value="F:large ribosomal subunit rRNA binding"/>
    <property type="evidence" value="ECO:0007669"/>
    <property type="project" value="UniProtKB-UniRule"/>
</dbReference>
<dbReference type="GO" id="GO:0003735">
    <property type="term" value="F:structural constituent of ribosome"/>
    <property type="evidence" value="ECO:0007669"/>
    <property type="project" value="InterPro"/>
</dbReference>
<dbReference type="GO" id="GO:0006412">
    <property type="term" value="P:translation"/>
    <property type="evidence" value="ECO:0007669"/>
    <property type="project" value="UniProtKB-UniRule"/>
</dbReference>
<dbReference type="CDD" id="cd00349">
    <property type="entry name" value="Ribosomal_L11"/>
    <property type="match status" value="1"/>
</dbReference>
<dbReference type="FunFam" id="1.10.10.250:FF:000001">
    <property type="entry name" value="50S ribosomal protein L11"/>
    <property type="match status" value="1"/>
</dbReference>
<dbReference type="FunFam" id="3.30.1550.10:FF:000001">
    <property type="entry name" value="50S ribosomal protein L11"/>
    <property type="match status" value="1"/>
</dbReference>
<dbReference type="Gene3D" id="1.10.10.250">
    <property type="entry name" value="Ribosomal protein L11, C-terminal domain"/>
    <property type="match status" value="1"/>
</dbReference>
<dbReference type="Gene3D" id="3.30.1550.10">
    <property type="entry name" value="Ribosomal protein L11/L12, N-terminal domain"/>
    <property type="match status" value="1"/>
</dbReference>
<dbReference type="HAMAP" id="MF_00736">
    <property type="entry name" value="Ribosomal_uL11"/>
    <property type="match status" value="1"/>
</dbReference>
<dbReference type="InterPro" id="IPR000911">
    <property type="entry name" value="Ribosomal_uL11"/>
</dbReference>
<dbReference type="InterPro" id="IPR006519">
    <property type="entry name" value="Ribosomal_uL11_bac-typ"/>
</dbReference>
<dbReference type="InterPro" id="IPR020783">
    <property type="entry name" value="Ribosomal_uL11_C"/>
</dbReference>
<dbReference type="InterPro" id="IPR036769">
    <property type="entry name" value="Ribosomal_uL11_C_sf"/>
</dbReference>
<dbReference type="InterPro" id="IPR020784">
    <property type="entry name" value="Ribosomal_uL11_N"/>
</dbReference>
<dbReference type="InterPro" id="IPR036796">
    <property type="entry name" value="Ribosomal_uL11_N_sf"/>
</dbReference>
<dbReference type="NCBIfam" id="TIGR01632">
    <property type="entry name" value="L11_bact"/>
    <property type="match status" value="1"/>
</dbReference>
<dbReference type="PANTHER" id="PTHR11661">
    <property type="entry name" value="60S RIBOSOMAL PROTEIN L12"/>
    <property type="match status" value="1"/>
</dbReference>
<dbReference type="PANTHER" id="PTHR11661:SF1">
    <property type="entry name" value="LARGE RIBOSOMAL SUBUNIT PROTEIN UL11M"/>
    <property type="match status" value="1"/>
</dbReference>
<dbReference type="Pfam" id="PF00298">
    <property type="entry name" value="Ribosomal_L11"/>
    <property type="match status" value="1"/>
</dbReference>
<dbReference type="Pfam" id="PF03946">
    <property type="entry name" value="Ribosomal_L11_N"/>
    <property type="match status" value="1"/>
</dbReference>
<dbReference type="SMART" id="SM00649">
    <property type="entry name" value="RL11"/>
    <property type="match status" value="1"/>
</dbReference>
<dbReference type="SUPFAM" id="SSF54747">
    <property type="entry name" value="Ribosomal L11/L12e N-terminal domain"/>
    <property type="match status" value="1"/>
</dbReference>
<dbReference type="SUPFAM" id="SSF46906">
    <property type="entry name" value="Ribosomal protein L11, C-terminal domain"/>
    <property type="match status" value="1"/>
</dbReference>
<organism>
    <name type="scientific">Nitratidesulfovibrio vulgaris (strain ATCC 29579 / DSM 644 / CCUG 34227 / NCIMB 8303 / VKM B-1760 / Hildenborough)</name>
    <name type="common">Desulfovibrio vulgaris</name>
    <dbReference type="NCBI Taxonomy" id="882"/>
    <lineage>
        <taxon>Bacteria</taxon>
        <taxon>Pseudomonadati</taxon>
        <taxon>Thermodesulfobacteriota</taxon>
        <taxon>Desulfovibrionia</taxon>
        <taxon>Desulfovibrionales</taxon>
        <taxon>Desulfovibrionaceae</taxon>
        <taxon>Nitratidesulfovibrio</taxon>
    </lineage>
</organism>